<organism>
    <name type="scientific">Bos taurus</name>
    <name type="common">Bovine</name>
    <dbReference type="NCBI Taxonomy" id="9913"/>
    <lineage>
        <taxon>Eukaryota</taxon>
        <taxon>Metazoa</taxon>
        <taxon>Chordata</taxon>
        <taxon>Craniata</taxon>
        <taxon>Vertebrata</taxon>
        <taxon>Euteleostomi</taxon>
        <taxon>Mammalia</taxon>
        <taxon>Eutheria</taxon>
        <taxon>Laurasiatheria</taxon>
        <taxon>Artiodactyla</taxon>
        <taxon>Ruminantia</taxon>
        <taxon>Pecora</taxon>
        <taxon>Bovidae</taxon>
        <taxon>Bovinae</taxon>
        <taxon>Bos</taxon>
    </lineage>
</organism>
<sequence length="239" mass="25877">MGSCQAGHYLHFCLAHHPPLVCATLILLLLGLSGLGLGGFLLTHRTDLRSPDIPQDWVSFLRSFGQLTLCPVNGTVTGKGRGSHIVGLLTTLNFGDGPDRNKTQTFQAQVQGSRMGLKGSFARELVLVTARVTTERTPGTCLYFSAIPEILPSSQPPIPCSEEGAGNATLSPRMSEECVGVWSHEGLVLTKLLTSEELTLCGSRLLVLGFFLILFCGLCCLTAACFHPRRESHWSRTRL</sequence>
<comment type="function">
    <text evidence="1">Cell death receptor specific for IGFBP3, may mediate caspase-8-dependent apoptosis upon ligand binding.</text>
</comment>
<comment type="subunit">
    <text evidence="1">Interacts with IGFBP3. Interacts with CASP8 (By similarity).</text>
</comment>
<comment type="subcellular location">
    <subcellularLocation>
        <location evidence="1">Cell membrane</location>
        <topology>Single-pass membrane protein</topology>
    </subcellularLocation>
</comment>
<keyword id="KW-0053">Apoptosis</keyword>
<keyword id="KW-1003">Cell membrane</keyword>
<keyword id="KW-0325">Glycoprotein</keyword>
<keyword id="KW-0472">Membrane</keyword>
<keyword id="KW-0675">Receptor</keyword>
<keyword id="KW-1185">Reference proteome</keyword>
<keyword id="KW-0732">Signal</keyword>
<keyword id="KW-0812">Transmembrane</keyword>
<keyword id="KW-1133">Transmembrane helix</keyword>
<gene>
    <name type="primary">TMEM219</name>
</gene>
<reference key="1">
    <citation type="submission" date="2007-07" db="EMBL/GenBank/DDBJ databases">
        <authorList>
            <consortium name="NIH - Mammalian Gene Collection (MGC) project"/>
        </authorList>
    </citation>
    <scope>NUCLEOTIDE SEQUENCE [LARGE SCALE MRNA]</scope>
    <source>
        <strain>Crossbred X Angus</strain>
        <strain>Hereford</strain>
        <tissue>Ileum</tissue>
        <tissue>Uterus</tissue>
    </source>
</reference>
<protein>
    <recommendedName>
        <fullName>Insulin-like growth factor-binding protein 3 receptor</fullName>
        <shortName>IGFBP-3R</shortName>
    </recommendedName>
    <alternativeName>
        <fullName>Transmembrane protein 219</fullName>
    </alternativeName>
</protein>
<proteinExistence type="evidence at transcript level"/>
<accession>Q1JQE1</accession>
<evidence type="ECO:0000250" key="1"/>
<evidence type="ECO:0000255" key="2"/>
<name>TM219_BOVIN</name>
<feature type="signal peptide" evidence="2">
    <location>
        <begin position="1"/>
        <end position="38"/>
    </location>
</feature>
<feature type="chain" id="PRO_0000420111" description="Insulin-like growth factor-binding protein 3 receptor">
    <location>
        <begin position="39"/>
        <end position="239"/>
    </location>
</feature>
<feature type="topological domain" description="Extracellular" evidence="2">
    <location>
        <begin position="39"/>
        <end position="205"/>
    </location>
</feature>
<feature type="transmembrane region" description="Helical" evidence="2">
    <location>
        <begin position="206"/>
        <end position="226"/>
    </location>
</feature>
<feature type="topological domain" description="Cytoplasmic" evidence="2">
    <location>
        <begin position="227"/>
        <end position="239"/>
    </location>
</feature>
<feature type="glycosylation site" description="N-linked (GlcNAc...) asparagine" evidence="2">
    <location>
        <position position="101"/>
    </location>
</feature>
<feature type="glycosylation site" description="N-linked (GlcNAc...) asparagine" evidence="2">
    <location>
        <position position="167"/>
    </location>
</feature>
<dbReference type="EMBL" id="BC116008">
    <property type="protein sequence ID" value="AAI16009.1"/>
    <property type="molecule type" value="mRNA"/>
</dbReference>
<dbReference type="EMBL" id="BC151424">
    <property type="protein sequence ID" value="AAI51425.1"/>
    <property type="molecule type" value="mRNA"/>
</dbReference>
<dbReference type="RefSeq" id="NP_001073700.2">
    <property type="nucleotide sequence ID" value="NM_001080231.1"/>
</dbReference>
<dbReference type="RefSeq" id="NP_001231223.1">
    <property type="nucleotide sequence ID" value="NM_001244294.1"/>
</dbReference>
<dbReference type="FunCoup" id="Q1JQE1">
    <property type="interactions" value="136"/>
</dbReference>
<dbReference type="STRING" id="9913.ENSBTAP00000072271"/>
<dbReference type="GlyCosmos" id="Q1JQE1">
    <property type="glycosylation" value="2 sites, No reported glycans"/>
</dbReference>
<dbReference type="GlyGen" id="Q1JQE1">
    <property type="glycosylation" value="2 sites"/>
</dbReference>
<dbReference type="PaxDb" id="9913-ENSBTAP00000029038"/>
<dbReference type="GeneID" id="506622"/>
<dbReference type="KEGG" id="bta:506622"/>
<dbReference type="CTD" id="124446"/>
<dbReference type="VEuPathDB" id="HostDB:ENSBTAG00000021785"/>
<dbReference type="eggNOG" id="ENOG502S30C">
    <property type="taxonomic scope" value="Eukaryota"/>
</dbReference>
<dbReference type="HOGENOM" id="CLU_101408_0_0_1"/>
<dbReference type="InParanoid" id="Q1JQE1"/>
<dbReference type="OMA" id="TCYSLNF"/>
<dbReference type="OrthoDB" id="8680674at2759"/>
<dbReference type="TreeFam" id="TF338507"/>
<dbReference type="Reactome" id="R-BTA-6803211">
    <property type="pathway name" value="TP53 Regulates Transcription of Death Receptors and Ligands"/>
</dbReference>
<dbReference type="Proteomes" id="UP000009136">
    <property type="component" value="Chromosome 25"/>
</dbReference>
<dbReference type="Bgee" id="ENSBTAG00000021785">
    <property type="expression patterns" value="Expressed in prostate gland and 104 other cell types or tissues"/>
</dbReference>
<dbReference type="GO" id="GO:0005886">
    <property type="term" value="C:plasma membrane"/>
    <property type="evidence" value="ECO:0007669"/>
    <property type="project" value="UniProtKB-SubCell"/>
</dbReference>
<dbReference type="GO" id="GO:0006915">
    <property type="term" value="P:apoptotic process"/>
    <property type="evidence" value="ECO:0007669"/>
    <property type="project" value="UniProtKB-KW"/>
</dbReference>
<dbReference type="InterPro" id="IPR039493">
    <property type="entry name" value="TMEM248/TMEM219"/>
</dbReference>
<dbReference type="InterPro" id="IPR039587">
    <property type="entry name" value="TMEM248/TMEM219_dom"/>
</dbReference>
<dbReference type="PANTHER" id="PTHR16002:SF6">
    <property type="entry name" value="INSULIN-LIKE GROWTH FACTOR-BINDING PROTEIN 3 RECEPTOR"/>
    <property type="match status" value="1"/>
</dbReference>
<dbReference type="PANTHER" id="PTHR16002">
    <property type="entry name" value="TRANSMEMBRANE PROTEIN 248-LIKE"/>
    <property type="match status" value="1"/>
</dbReference>
<dbReference type="Pfam" id="PF14940">
    <property type="entry name" value="TMEM219"/>
    <property type="match status" value="1"/>
</dbReference>